<comment type="function">
    <text evidence="1">Signaling peptide involved in the regulation of lateral organs separation.</text>
</comment>
<comment type="subcellular location">
    <subcellularLocation>
        <location evidence="1">Secreted</location>
    </subcellularLocation>
</comment>
<comment type="tissue specificity">
    <text evidence="3">Confined to the vasculature of various organs, including seedling roots, leaves, cotyledons, sepals and petals. Also accumulates in root hair cells.</text>
</comment>
<comment type="developmental stage">
    <text evidence="3">In seedlings, observed at high levels in the vasculature of cotyledons, first true leaves, and hypocoty. In flowers, expressed in the vasculature of sepals, petals, and style. In the paraclade junctions between the primary stem and axillary stems, mainly detected in the vasculature of cauline leaves.</text>
</comment>
<comment type="disruption phenotype">
    <text evidence="3 4">No visible phenotype.</text>
</comment>
<comment type="sequence caution" evidence="6">
    <conflict type="erroneous termination">
        <sequence resource="EMBL-CDS" id="ABK28360"/>
    </conflict>
    <text>Extended C-terminus.</text>
</comment>
<proteinExistence type="evidence at transcript level"/>
<accession>Q1G309</accession>
<accession>A0MDZ4</accession>
<name>TAX2_ARATH</name>
<organism>
    <name type="scientific">Arabidopsis thaliana</name>
    <name type="common">Mouse-ear cress</name>
    <dbReference type="NCBI Taxonomy" id="3702"/>
    <lineage>
        <taxon>Eukaryota</taxon>
        <taxon>Viridiplantae</taxon>
        <taxon>Streptophyta</taxon>
        <taxon>Embryophyta</taxon>
        <taxon>Tracheophyta</taxon>
        <taxon>Spermatophyta</taxon>
        <taxon>Magnoliopsida</taxon>
        <taxon>eudicotyledons</taxon>
        <taxon>Gunneridae</taxon>
        <taxon>Pentapetalae</taxon>
        <taxon>rosids</taxon>
        <taxon>malvids</taxon>
        <taxon>Brassicales</taxon>
        <taxon>Brassicaceae</taxon>
        <taxon>Camelineae</taxon>
        <taxon>Arabidopsis</taxon>
    </lineage>
</organism>
<gene>
    <name evidence="5" type="primary">TAX2</name>
    <name evidence="7" type="ordered locus">At2g20562</name>
    <name evidence="8" type="ORF">T13C7</name>
</gene>
<reference key="1">
    <citation type="journal article" date="1999" name="Nature">
        <title>Sequence and analysis of chromosome 2 of the plant Arabidopsis thaliana.</title>
        <authorList>
            <person name="Lin X."/>
            <person name="Kaul S."/>
            <person name="Rounsley S.D."/>
            <person name="Shea T.P."/>
            <person name="Benito M.-I."/>
            <person name="Town C.D."/>
            <person name="Fujii C.Y."/>
            <person name="Mason T.M."/>
            <person name="Bowman C.L."/>
            <person name="Barnstead M.E."/>
            <person name="Feldblyum T.V."/>
            <person name="Buell C.R."/>
            <person name="Ketchum K.A."/>
            <person name="Lee J.J."/>
            <person name="Ronning C.M."/>
            <person name="Koo H.L."/>
            <person name="Moffat K.S."/>
            <person name="Cronin L.A."/>
            <person name="Shen M."/>
            <person name="Pai G."/>
            <person name="Van Aken S."/>
            <person name="Umayam L."/>
            <person name="Tallon L.J."/>
            <person name="Gill J.E."/>
            <person name="Adams M.D."/>
            <person name="Carrera A.J."/>
            <person name="Creasy T.H."/>
            <person name="Goodman H.M."/>
            <person name="Somerville C.R."/>
            <person name="Copenhaver G.P."/>
            <person name="Preuss D."/>
            <person name="Nierman W.C."/>
            <person name="White O."/>
            <person name="Eisen J.A."/>
            <person name="Salzberg S.L."/>
            <person name="Fraser C.M."/>
            <person name="Venter J.C."/>
        </authorList>
    </citation>
    <scope>NUCLEOTIDE SEQUENCE [LARGE SCALE GENOMIC DNA]</scope>
    <source>
        <strain>cv. Columbia</strain>
    </source>
</reference>
<reference key="2">
    <citation type="journal article" date="2017" name="Plant J.">
        <title>Araport11: a complete reannotation of the Arabidopsis thaliana reference genome.</title>
        <authorList>
            <person name="Cheng C.Y."/>
            <person name="Krishnakumar V."/>
            <person name="Chan A.P."/>
            <person name="Thibaud-Nissen F."/>
            <person name="Schobel S."/>
            <person name="Town C.D."/>
        </authorList>
    </citation>
    <scope>GENOME REANNOTATION</scope>
    <source>
        <strain>cv. Columbia</strain>
    </source>
</reference>
<reference key="3">
    <citation type="journal article" date="2006" name="Plant Biotechnol. J.">
        <title>Simultaneous high-throughput recombinational cloning of open reading frames in closed and open configurations.</title>
        <authorList>
            <person name="Underwood B.A."/>
            <person name="Vanderhaeghen R."/>
            <person name="Whitford R."/>
            <person name="Town C.D."/>
            <person name="Hilson P."/>
        </authorList>
    </citation>
    <scope>NUCLEOTIDE SEQUENCE [LARGE SCALE MRNA]</scope>
    <source>
        <strain>cv. Columbia</strain>
    </source>
</reference>
<reference key="4">
    <citation type="journal article" date="2015" name="J. Exp. Bot.">
        <title>Overexpression of the Arabidopsis thaliana signalling peptide TAXIMIN1 affects lateral organ development.</title>
        <authorList>
            <person name="Colling J."/>
            <person name="Tohge T."/>
            <person name="De Clercq R."/>
            <person name="Brunoud G."/>
            <person name="Vernoux T."/>
            <person name="Fernie A.R."/>
            <person name="Makunga N.P."/>
            <person name="Goossens A."/>
            <person name="Pauwels L."/>
        </authorList>
    </citation>
    <scope>DISRUPTION PHENOTYPE</scope>
    <scope>TISSUE SPECIFICITY</scope>
    <scope>DEVELOPMENTAL STAGE</scope>
    <source>
        <strain>cv. Columbia</strain>
    </source>
</reference>
<reference key="5">
    <citation type="journal article" date="2016" name="Plant Signal. Behav.">
        <title>Hypersensitivity of Arabidopsis TAXIMIN1 overexpression lines to light stress is correlated with decreased sinapoyl malate abundance and countered by the antibiotic cefotaxime.</title>
        <authorList>
            <person name="Colling J."/>
            <person name="Pollier J."/>
            <person name="Vanden Bossche R."/>
            <person name="Makunga N.P."/>
            <person name="Pauwels L."/>
            <person name="Goossens A."/>
        </authorList>
    </citation>
    <scope>DISRUPTION PHENOTYPE</scope>
</reference>
<evidence type="ECO:0000250" key="1">
    <source>
        <dbReference type="UniProtKB" id="O82275"/>
    </source>
</evidence>
<evidence type="ECO:0000255" key="2"/>
<evidence type="ECO:0000269" key="3">
    <source>
    </source>
</evidence>
<evidence type="ECO:0000269" key="4">
    <source>
    </source>
</evidence>
<evidence type="ECO:0000303" key="5">
    <source>
    </source>
</evidence>
<evidence type="ECO:0000305" key="6"/>
<evidence type="ECO:0000312" key="7">
    <source>
        <dbReference type="Araport" id="AT2G20562"/>
    </source>
</evidence>
<evidence type="ECO:0000312" key="8">
    <source>
        <dbReference type="EMBL" id="AC007109"/>
    </source>
</evidence>
<feature type="signal peptide" evidence="2">
    <location>
        <begin position="1"/>
        <end position="27"/>
    </location>
</feature>
<feature type="chain" id="PRO_0000446132" description="Signaling peptide TAXIMIN 2">
    <location>
        <begin position="28"/>
        <end position="73"/>
    </location>
</feature>
<sequence>MGDCRPLGFLIGLPFALVALVLALVGAVIWIIGTVLSCLCPCCFCFAALANFAVDLIKLPIKVLRWFTHSIPC</sequence>
<protein>
    <recommendedName>
        <fullName evidence="5">Signaling peptide TAXIMIN 2</fullName>
    </recommendedName>
</protein>
<dbReference type="EMBL" id="AC007109">
    <property type="status" value="NOT_ANNOTATED_CDS"/>
    <property type="molecule type" value="Genomic_DNA"/>
</dbReference>
<dbReference type="EMBL" id="CP002685">
    <property type="protein sequence ID" value="AEC07029.1"/>
    <property type="molecule type" value="Genomic_DNA"/>
</dbReference>
<dbReference type="EMBL" id="DQ492219">
    <property type="protein sequence ID" value="ABF59148.1"/>
    <property type="molecule type" value="mRNA"/>
</dbReference>
<dbReference type="EMBL" id="DQ652760">
    <property type="protein sequence ID" value="ABK28360.1"/>
    <property type="status" value="ALT_SEQ"/>
    <property type="molecule type" value="mRNA"/>
</dbReference>
<dbReference type="RefSeq" id="NP_001077925.1">
    <property type="nucleotide sequence ID" value="NM_001084456.3"/>
</dbReference>
<dbReference type="SMR" id="Q1G309"/>
<dbReference type="STRING" id="3702.Q1G309"/>
<dbReference type="PaxDb" id="3702-AT2G20562.1"/>
<dbReference type="EnsemblPlants" id="AT2G20562.1">
    <property type="protein sequence ID" value="AT2G20562.1"/>
    <property type="gene ID" value="AT2G20562"/>
</dbReference>
<dbReference type="GeneID" id="5007888"/>
<dbReference type="Gramene" id="AT2G20562.1">
    <property type="protein sequence ID" value="AT2G20562.1"/>
    <property type="gene ID" value="AT2G20562"/>
</dbReference>
<dbReference type="KEGG" id="ath:AT2G20562"/>
<dbReference type="Araport" id="AT2G20562"/>
<dbReference type="TAIR" id="AT2G20562">
    <property type="gene designation" value="TAX2"/>
</dbReference>
<dbReference type="eggNOG" id="ENOG502S5CY">
    <property type="taxonomic scope" value="Eukaryota"/>
</dbReference>
<dbReference type="HOGENOM" id="CLU_180321_0_0_1"/>
<dbReference type="InParanoid" id="Q1G309"/>
<dbReference type="OMA" id="ICPCCAC"/>
<dbReference type="PhylomeDB" id="Q1G309"/>
<dbReference type="PRO" id="PR:Q1G309"/>
<dbReference type="Proteomes" id="UP000006548">
    <property type="component" value="Chromosome 2"/>
</dbReference>
<dbReference type="ExpressionAtlas" id="Q1G309">
    <property type="expression patterns" value="baseline and differential"/>
</dbReference>
<dbReference type="GO" id="GO:0005615">
    <property type="term" value="C:extracellular space"/>
    <property type="evidence" value="ECO:0000250"/>
    <property type="project" value="UniProtKB"/>
</dbReference>
<dbReference type="InterPro" id="IPR055283">
    <property type="entry name" value="TAXIMIN_1/2"/>
</dbReference>
<dbReference type="PANTHER" id="PTHR33834">
    <property type="entry name" value="SIGNALING PEPTIDE TAXIMIN 2"/>
    <property type="match status" value="1"/>
</dbReference>
<dbReference type="PANTHER" id="PTHR33834:SF4">
    <property type="entry name" value="SIGNALING PEPTIDE TAXIMIN 2"/>
    <property type="match status" value="1"/>
</dbReference>
<keyword id="KW-0217">Developmental protein</keyword>
<keyword id="KW-1185">Reference proteome</keyword>
<keyword id="KW-0964">Secreted</keyword>
<keyword id="KW-0732">Signal</keyword>